<name>RL37_METMA</name>
<organism>
    <name type="scientific">Methanosarcina mazei (strain ATCC BAA-159 / DSM 3647 / Goe1 / Go1 / JCM 11833 / OCM 88)</name>
    <name type="common">Methanosarcina frisia</name>
    <dbReference type="NCBI Taxonomy" id="192952"/>
    <lineage>
        <taxon>Archaea</taxon>
        <taxon>Methanobacteriati</taxon>
        <taxon>Methanobacteriota</taxon>
        <taxon>Stenosarchaea group</taxon>
        <taxon>Methanomicrobia</taxon>
        <taxon>Methanosarcinales</taxon>
        <taxon>Methanosarcinaceae</taxon>
        <taxon>Methanosarcina</taxon>
    </lineage>
</organism>
<evidence type="ECO:0000255" key="1">
    <source>
        <dbReference type="HAMAP-Rule" id="MF_00547"/>
    </source>
</evidence>
<evidence type="ECO:0000305" key="2"/>
<reference key="1">
    <citation type="journal article" date="2002" name="J. Mol. Microbiol. Biotechnol.">
        <title>The genome of Methanosarcina mazei: evidence for lateral gene transfer between Bacteria and Archaea.</title>
        <authorList>
            <person name="Deppenmeier U."/>
            <person name="Johann A."/>
            <person name="Hartsch T."/>
            <person name="Merkl R."/>
            <person name="Schmitz R.A."/>
            <person name="Martinez-Arias R."/>
            <person name="Henne A."/>
            <person name="Wiezer A."/>
            <person name="Baeumer S."/>
            <person name="Jacobi C."/>
            <person name="Brueggemann H."/>
            <person name="Lienard T."/>
            <person name="Christmann A."/>
            <person name="Boemecke M."/>
            <person name="Steckel S."/>
            <person name="Bhattacharyya A."/>
            <person name="Lykidis A."/>
            <person name="Overbeek R."/>
            <person name="Klenk H.-P."/>
            <person name="Gunsalus R.P."/>
            <person name="Fritz H.-J."/>
            <person name="Gottschalk G."/>
        </authorList>
    </citation>
    <scope>NUCLEOTIDE SEQUENCE [LARGE SCALE GENOMIC DNA]</scope>
    <source>
        <strain>ATCC BAA-159 / DSM 3647 / Goe1 / Go1 / JCM 11833 / OCM 88</strain>
    </source>
</reference>
<protein>
    <recommendedName>
        <fullName evidence="1">Large ribosomal subunit protein eL37</fullName>
    </recommendedName>
    <alternativeName>
        <fullName evidence="2">50S ribosomal protein L37e</fullName>
    </alternativeName>
</protein>
<feature type="chain" id="PRO_0000139731" description="Large ribosomal subunit protein eL37">
    <location>
        <begin position="1"/>
        <end position="56"/>
    </location>
</feature>
<feature type="zinc finger region" description="C4-type" evidence="1">
    <location>
        <begin position="19"/>
        <end position="37"/>
    </location>
</feature>
<feature type="binding site" evidence="1">
    <location>
        <position position="19"/>
    </location>
    <ligand>
        <name>Zn(2+)</name>
        <dbReference type="ChEBI" id="CHEBI:29105"/>
    </ligand>
</feature>
<feature type="binding site" evidence="1">
    <location>
        <position position="22"/>
    </location>
    <ligand>
        <name>Zn(2+)</name>
        <dbReference type="ChEBI" id="CHEBI:29105"/>
    </ligand>
</feature>
<feature type="binding site" evidence="1">
    <location>
        <position position="34"/>
    </location>
    <ligand>
        <name>Zn(2+)</name>
        <dbReference type="ChEBI" id="CHEBI:29105"/>
    </ligand>
</feature>
<feature type="binding site" evidence="1">
    <location>
        <position position="37"/>
    </location>
    <ligand>
        <name>Zn(2+)</name>
        <dbReference type="ChEBI" id="CHEBI:29105"/>
    </ligand>
</feature>
<gene>
    <name evidence="1" type="primary">rpl37e</name>
    <name type="ordered locus">MM_0340</name>
</gene>
<comment type="function">
    <text evidence="1">Binds to the 23S rRNA.</text>
</comment>
<comment type="cofactor">
    <cofactor evidence="1">
        <name>Zn(2+)</name>
        <dbReference type="ChEBI" id="CHEBI:29105"/>
    </cofactor>
    <text evidence="1">Binds 1 zinc ion per subunit.</text>
</comment>
<comment type="similarity">
    <text evidence="1">Belongs to the eukaryotic ribosomal protein eL37 family.</text>
</comment>
<sequence length="56" mass="6390">MSKGTASMGKRQKRTHAKCRRCGSVSLNVHTKQCTSCGFGKTSRMRTYKWQAKCKY</sequence>
<accession>Q8PZZ8</accession>
<proteinExistence type="inferred from homology"/>
<dbReference type="EMBL" id="AE008384">
    <property type="protein sequence ID" value="AAM30036.1"/>
    <property type="molecule type" value="Genomic_DNA"/>
</dbReference>
<dbReference type="RefSeq" id="WP_011032294.1">
    <property type="nucleotide sequence ID" value="NC_003901.1"/>
</dbReference>
<dbReference type="SMR" id="Q8PZZ8"/>
<dbReference type="KEGG" id="mma:MM_0340"/>
<dbReference type="PATRIC" id="fig|192952.21.peg.414"/>
<dbReference type="eggNOG" id="arCOG04126">
    <property type="taxonomic scope" value="Archaea"/>
</dbReference>
<dbReference type="HOGENOM" id="CLU_208825_0_0_2"/>
<dbReference type="Proteomes" id="UP000000595">
    <property type="component" value="Chromosome"/>
</dbReference>
<dbReference type="GO" id="GO:1990904">
    <property type="term" value="C:ribonucleoprotein complex"/>
    <property type="evidence" value="ECO:0007669"/>
    <property type="project" value="UniProtKB-KW"/>
</dbReference>
<dbReference type="GO" id="GO:0005840">
    <property type="term" value="C:ribosome"/>
    <property type="evidence" value="ECO:0007669"/>
    <property type="project" value="UniProtKB-KW"/>
</dbReference>
<dbReference type="GO" id="GO:0019843">
    <property type="term" value="F:rRNA binding"/>
    <property type="evidence" value="ECO:0007669"/>
    <property type="project" value="UniProtKB-KW"/>
</dbReference>
<dbReference type="GO" id="GO:0003735">
    <property type="term" value="F:structural constituent of ribosome"/>
    <property type="evidence" value="ECO:0007669"/>
    <property type="project" value="InterPro"/>
</dbReference>
<dbReference type="GO" id="GO:0008270">
    <property type="term" value="F:zinc ion binding"/>
    <property type="evidence" value="ECO:0007669"/>
    <property type="project" value="UniProtKB-UniRule"/>
</dbReference>
<dbReference type="GO" id="GO:0006412">
    <property type="term" value="P:translation"/>
    <property type="evidence" value="ECO:0007669"/>
    <property type="project" value="UniProtKB-UniRule"/>
</dbReference>
<dbReference type="FunFam" id="2.20.25.30:FF:000003">
    <property type="entry name" value="50S ribosomal protein L37e"/>
    <property type="match status" value="1"/>
</dbReference>
<dbReference type="Gene3D" id="2.20.25.30">
    <property type="match status" value="1"/>
</dbReference>
<dbReference type="HAMAP" id="MF_00547">
    <property type="entry name" value="Ribosomal_eL37"/>
    <property type="match status" value="1"/>
</dbReference>
<dbReference type="InterPro" id="IPR001569">
    <property type="entry name" value="Ribosomal_eL37"/>
</dbReference>
<dbReference type="InterPro" id="IPR011331">
    <property type="entry name" value="Ribosomal_eL37/eL43"/>
</dbReference>
<dbReference type="InterPro" id="IPR018267">
    <property type="entry name" value="Ribosomal_eL37_CS"/>
</dbReference>
<dbReference type="InterPro" id="IPR011332">
    <property type="entry name" value="Ribosomal_zn-bd"/>
</dbReference>
<dbReference type="NCBIfam" id="NF003214">
    <property type="entry name" value="PRK04179.1"/>
    <property type="match status" value="1"/>
</dbReference>
<dbReference type="Pfam" id="PF01907">
    <property type="entry name" value="Ribosomal_L37e"/>
    <property type="match status" value="1"/>
</dbReference>
<dbReference type="SUPFAM" id="SSF57829">
    <property type="entry name" value="Zn-binding ribosomal proteins"/>
    <property type="match status" value="1"/>
</dbReference>
<dbReference type="PROSITE" id="PS01077">
    <property type="entry name" value="RIBOSOMAL_L37E"/>
    <property type="match status" value="1"/>
</dbReference>
<keyword id="KW-0479">Metal-binding</keyword>
<keyword id="KW-0687">Ribonucleoprotein</keyword>
<keyword id="KW-0689">Ribosomal protein</keyword>
<keyword id="KW-0694">RNA-binding</keyword>
<keyword id="KW-0699">rRNA-binding</keyword>
<keyword id="KW-0862">Zinc</keyword>
<keyword id="KW-0863">Zinc-finger</keyword>